<gene>
    <name evidence="1" type="primary">xseB</name>
    <name type="ordered locus">Xfasm12_1652</name>
</gene>
<dbReference type="EC" id="3.1.11.6" evidence="1"/>
<dbReference type="EMBL" id="CP000941">
    <property type="protein sequence ID" value="ACA12560.1"/>
    <property type="molecule type" value="Genomic_DNA"/>
</dbReference>
<dbReference type="RefSeq" id="WP_012338010.1">
    <property type="nucleotide sequence ID" value="NC_010513.1"/>
</dbReference>
<dbReference type="SMR" id="B0U3Y1"/>
<dbReference type="KEGG" id="xfm:Xfasm12_1652"/>
<dbReference type="HOGENOM" id="CLU_145918_3_3_6"/>
<dbReference type="GO" id="GO:0005829">
    <property type="term" value="C:cytosol"/>
    <property type="evidence" value="ECO:0007669"/>
    <property type="project" value="TreeGrafter"/>
</dbReference>
<dbReference type="GO" id="GO:0009318">
    <property type="term" value="C:exodeoxyribonuclease VII complex"/>
    <property type="evidence" value="ECO:0007669"/>
    <property type="project" value="InterPro"/>
</dbReference>
<dbReference type="GO" id="GO:0008855">
    <property type="term" value="F:exodeoxyribonuclease VII activity"/>
    <property type="evidence" value="ECO:0007669"/>
    <property type="project" value="UniProtKB-UniRule"/>
</dbReference>
<dbReference type="GO" id="GO:0006308">
    <property type="term" value="P:DNA catabolic process"/>
    <property type="evidence" value="ECO:0007669"/>
    <property type="project" value="UniProtKB-UniRule"/>
</dbReference>
<dbReference type="Gene3D" id="1.10.287.1040">
    <property type="entry name" value="Exonuclease VII, small subunit"/>
    <property type="match status" value="1"/>
</dbReference>
<dbReference type="HAMAP" id="MF_00337">
    <property type="entry name" value="Exonuc_7_S"/>
    <property type="match status" value="1"/>
</dbReference>
<dbReference type="InterPro" id="IPR003761">
    <property type="entry name" value="Exonuc_VII_S"/>
</dbReference>
<dbReference type="InterPro" id="IPR037004">
    <property type="entry name" value="Exonuc_VII_ssu_sf"/>
</dbReference>
<dbReference type="NCBIfam" id="NF002140">
    <property type="entry name" value="PRK00977.1-4"/>
    <property type="match status" value="1"/>
</dbReference>
<dbReference type="NCBIfam" id="TIGR01280">
    <property type="entry name" value="xseB"/>
    <property type="match status" value="1"/>
</dbReference>
<dbReference type="PANTHER" id="PTHR34137">
    <property type="entry name" value="EXODEOXYRIBONUCLEASE 7 SMALL SUBUNIT"/>
    <property type="match status" value="1"/>
</dbReference>
<dbReference type="PANTHER" id="PTHR34137:SF1">
    <property type="entry name" value="EXODEOXYRIBONUCLEASE 7 SMALL SUBUNIT"/>
    <property type="match status" value="1"/>
</dbReference>
<dbReference type="Pfam" id="PF02609">
    <property type="entry name" value="Exonuc_VII_S"/>
    <property type="match status" value="1"/>
</dbReference>
<dbReference type="SUPFAM" id="SSF116842">
    <property type="entry name" value="XseB-like"/>
    <property type="match status" value="1"/>
</dbReference>
<protein>
    <recommendedName>
        <fullName evidence="1">Exodeoxyribonuclease 7 small subunit</fullName>
        <ecNumber evidence="1">3.1.11.6</ecNumber>
    </recommendedName>
    <alternativeName>
        <fullName evidence="1">Exodeoxyribonuclease VII small subunit</fullName>
        <shortName evidence="1">Exonuclease VII small subunit</shortName>
    </alternativeName>
</protein>
<evidence type="ECO:0000255" key="1">
    <source>
        <dbReference type="HAMAP-Rule" id="MF_00337"/>
    </source>
</evidence>
<evidence type="ECO:0000256" key="2">
    <source>
        <dbReference type="SAM" id="MobiDB-lite"/>
    </source>
</evidence>
<organism>
    <name type="scientific">Xylella fastidiosa (strain M12)</name>
    <dbReference type="NCBI Taxonomy" id="405440"/>
    <lineage>
        <taxon>Bacteria</taxon>
        <taxon>Pseudomonadati</taxon>
        <taxon>Pseudomonadota</taxon>
        <taxon>Gammaproteobacteria</taxon>
        <taxon>Lysobacterales</taxon>
        <taxon>Lysobacteraceae</taxon>
        <taxon>Xylella</taxon>
    </lineage>
</organism>
<sequence length="88" mass="9866">MPKHSPPDTSPVARFEQSLQELEQLVQNMETGALSLEQSLGAYERGIALYRECHQALEQAQLRVRILSDPMRPDDGEPFDPSIVSTSQ</sequence>
<name>EX7S_XYLFM</name>
<keyword id="KW-0963">Cytoplasm</keyword>
<keyword id="KW-0269">Exonuclease</keyword>
<keyword id="KW-0378">Hydrolase</keyword>
<keyword id="KW-0540">Nuclease</keyword>
<accession>B0U3Y1</accession>
<reference key="1">
    <citation type="journal article" date="2010" name="J. Bacteriol.">
        <title>Whole genome sequences of two Xylella fastidiosa strains (M12 and M23) causing almond leaf scorch disease in California.</title>
        <authorList>
            <person name="Chen J."/>
            <person name="Xie G."/>
            <person name="Han S."/>
            <person name="Chertkov O."/>
            <person name="Sims D."/>
            <person name="Civerolo E.L."/>
        </authorList>
    </citation>
    <scope>NUCLEOTIDE SEQUENCE [LARGE SCALE GENOMIC DNA]</scope>
    <source>
        <strain>M12</strain>
    </source>
</reference>
<proteinExistence type="inferred from homology"/>
<feature type="chain" id="PRO_1000119971" description="Exodeoxyribonuclease 7 small subunit">
    <location>
        <begin position="1"/>
        <end position="88"/>
    </location>
</feature>
<feature type="region of interest" description="Disordered" evidence="2">
    <location>
        <begin position="69"/>
        <end position="88"/>
    </location>
</feature>
<comment type="function">
    <text evidence="1">Bidirectionally degrades single-stranded DNA into large acid-insoluble oligonucleotides, which are then degraded further into small acid-soluble oligonucleotides.</text>
</comment>
<comment type="catalytic activity">
    <reaction evidence="1">
        <text>Exonucleolytic cleavage in either 5'- to 3'- or 3'- to 5'-direction to yield nucleoside 5'-phosphates.</text>
        <dbReference type="EC" id="3.1.11.6"/>
    </reaction>
</comment>
<comment type="subunit">
    <text evidence="1">Heterooligomer composed of large and small subunits.</text>
</comment>
<comment type="subcellular location">
    <subcellularLocation>
        <location evidence="1">Cytoplasm</location>
    </subcellularLocation>
</comment>
<comment type="similarity">
    <text evidence="1">Belongs to the XseB family.</text>
</comment>